<organism>
    <name type="scientific">Halorhodospira halophila (strain DSM 244 / SL1)</name>
    <name type="common">Ectothiorhodospira halophila (strain DSM 244 / SL1)</name>
    <dbReference type="NCBI Taxonomy" id="349124"/>
    <lineage>
        <taxon>Bacteria</taxon>
        <taxon>Pseudomonadati</taxon>
        <taxon>Pseudomonadota</taxon>
        <taxon>Gammaproteobacteria</taxon>
        <taxon>Chromatiales</taxon>
        <taxon>Ectothiorhodospiraceae</taxon>
        <taxon>Halorhodospira</taxon>
    </lineage>
</organism>
<name>MINE_HALHL</name>
<accession>A1WXE1</accession>
<keyword id="KW-0131">Cell cycle</keyword>
<keyword id="KW-0132">Cell division</keyword>
<keyword id="KW-1185">Reference proteome</keyword>
<comment type="function">
    <text evidence="1">Prevents the cell division inhibition by proteins MinC and MinD at internal division sites while permitting inhibition at polar sites. This ensures cell division at the proper site by restricting the formation of a division septum at the midpoint of the long axis of the cell.</text>
</comment>
<comment type="similarity">
    <text evidence="1">Belongs to the MinE family.</text>
</comment>
<feature type="chain" id="PRO_0000298125" description="Cell division topological specificity factor">
    <location>
        <begin position="1"/>
        <end position="93"/>
    </location>
</feature>
<dbReference type="EMBL" id="CP000544">
    <property type="protein sequence ID" value="ABM62353.1"/>
    <property type="molecule type" value="Genomic_DNA"/>
</dbReference>
<dbReference type="RefSeq" id="WP_011814375.1">
    <property type="nucleotide sequence ID" value="NC_008789.1"/>
</dbReference>
<dbReference type="SMR" id="A1WXE1"/>
<dbReference type="STRING" id="349124.Hhal_1589"/>
<dbReference type="KEGG" id="hha:Hhal_1589"/>
<dbReference type="eggNOG" id="COG0851">
    <property type="taxonomic scope" value="Bacteria"/>
</dbReference>
<dbReference type="HOGENOM" id="CLU_137929_2_2_6"/>
<dbReference type="OrthoDB" id="9802655at2"/>
<dbReference type="Proteomes" id="UP000000647">
    <property type="component" value="Chromosome"/>
</dbReference>
<dbReference type="GO" id="GO:0051301">
    <property type="term" value="P:cell division"/>
    <property type="evidence" value="ECO:0007669"/>
    <property type="project" value="UniProtKB-KW"/>
</dbReference>
<dbReference type="GO" id="GO:0032955">
    <property type="term" value="P:regulation of division septum assembly"/>
    <property type="evidence" value="ECO:0007669"/>
    <property type="project" value="InterPro"/>
</dbReference>
<dbReference type="FunFam" id="3.30.1070.10:FF:000001">
    <property type="entry name" value="Cell division topological specificity factor"/>
    <property type="match status" value="1"/>
</dbReference>
<dbReference type="Gene3D" id="3.30.1070.10">
    <property type="entry name" value="Cell division topological specificity factor MinE"/>
    <property type="match status" value="1"/>
</dbReference>
<dbReference type="HAMAP" id="MF_00262">
    <property type="entry name" value="MinE"/>
    <property type="match status" value="1"/>
</dbReference>
<dbReference type="InterPro" id="IPR005527">
    <property type="entry name" value="MinE"/>
</dbReference>
<dbReference type="InterPro" id="IPR036707">
    <property type="entry name" value="MinE_sf"/>
</dbReference>
<dbReference type="NCBIfam" id="TIGR01215">
    <property type="entry name" value="minE"/>
    <property type="match status" value="1"/>
</dbReference>
<dbReference type="NCBIfam" id="NF001422">
    <property type="entry name" value="PRK00296.1"/>
    <property type="match status" value="1"/>
</dbReference>
<dbReference type="Pfam" id="PF03776">
    <property type="entry name" value="MinE"/>
    <property type="match status" value="1"/>
</dbReference>
<dbReference type="SUPFAM" id="SSF55229">
    <property type="entry name" value="Cell division protein MinE topological specificity domain"/>
    <property type="match status" value="1"/>
</dbReference>
<reference key="1">
    <citation type="submission" date="2006-12" db="EMBL/GenBank/DDBJ databases">
        <title>Complete sequence of Halorhodospira halophila SL1.</title>
        <authorList>
            <consortium name="US DOE Joint Genome Institute"/>
            <person name="Copeland A."/>
            <person name="Lucas S."/>
            <person name="Lapidus A."/>
            <person name="Barry K."/>
            <person name="Detter J.C."/>
            <person name="Glavina del Rio T."/>
            <person name="Hammon N."/>
            <person name="Israni S."/>
            <person name="Dalin E."/>
            <person name="Tice H."/>
            <person name="Pitluck S."/>
            <person name="Saunders E."/>
            <person name="Brettin T."/>
            <person name="Bruce D."/>
            <person name="Han C."/>
            <person name="Tapia R."/>
            <person name="Schmutz J."/>
            <person name="Larimer F."/>
            <person name="Land M."/>
            <person name="Hauser L."/>
            <person name="Kyrpides N."/>
            <person name="Mikhailova N."/>
            <person name="Hoff W."/>
            <person name="Richardson P."/>
        </authorList>
    </citation>
    <scope>NUCLEOTIDE SEQUENCE [LARGE SCALE GENOMIC DNA]</scope>
    <source>
        <strain>DSM 244 / SL1</strain>
    </source>
</reference>
<evidence type="ECO:0000255" key="1">
    <source>
        <dbReference type="HAMAP-Rule" id="MF_00262"/>
    </source>
</evidence>
<gene>
    <name evidence="1" type="primary">minE</name>
    <name type="ordered locus">Hhal_1589</name>
</gene>
<sequence length="93" mass="10840">MGIADYFRERRRSRRGSASVAKERLQIIVSHERAERGGPDYLPMLRQELLEVVRRYVTVDPDAVRVDVERDGPHEVLELNITLPEREEEGAQR</sequence>
<protein>
    <recommendedName>
        <fullName evidence="1">Cell division topological specificity factor</fullName>
    </recommendedName>
</protein>
<proteinExistence type="inferred from homology"/>